<evidence type="ECO:0000255" key="1">
    <source>
        <dbReference type="HAMAP-Rule" id="MF_00475"/>
    </source>
</evidence>
<keyword id="KW-0963">Cytoplasm</keyword>
<keyword id="KW-0238">DNA-binding</keyword>
<keyword id="KW-0678">Repressor</keyword>
<keyword id="KW-0804">Transcription</keyword>
<keyword id="KW-0805">Transcription regulation</keyword>
<gene>
    <name evidence="1" type="primary">trpR</name>
    <name type="ordered locus">Spro_0676</name>
</gene>
<proteinExistence type="inferred from homology"/>
<dbReference type="EMBL" id="CP000826">
    <property type="protein sequence ID" value="ABV39782.1"/>
    <property type="molecule type" value="Genomic_DNA"/>
</dbReference>
<dbReference type="SMR" id="A8G9J2"/>
<dbReference type="STRING" id="399741.Spro_0676"/>
<dbReference type="KEGG" id="spe:Spro_0676"/>
<dbReference type="eggNOG" id="COG2973">
    <property type="taxonomic scope" value="Bacteria"/>
</dbReference>
<dbReference type="HOGENOM" id="CLU_147939_0_0_6"/>
<dbReference type="OrthoDB" id="5704033at2"/>
<dbReference type="GO" id="GO:0005737">
    <property type="term" value="C:cytoplasm"/>
    <property type="evidence" value="ECO:0007669"/>
    <property type="project" value="UniProtKB-SubCell"/>
</dbReference>
<dbReference type="GO" id="GO:0003700">
    <property type="term" value="F:DNA-binding transcription factor activity"/>
    <property type="evidence" value="ECO:0007669"/>
    <property type="project" value="InterPro"/>
</dbReference>
<dbReference type="GO" id="GO:0043565">
    <property type="term" value="F:sequence-specific DNA binding"/>
    <property type="evidence" value="ECO:0007669"/>
    <property type="project" value="InterPro"/>
</dbReference>
<dbReference type="GO" id="GO:0045892">
    <property type="term" value="P:negative regulation of DNA-templated transcription"/>
    <property type="evidence" value="ECO:0007669"/>
    <property type="project" value="UniProtKB-UniRule"/>
</dbReference>
<dbReference type="FunFam" id="1.10.1270.10:FF:000001">
    <property type="entry name" value="Trp operon repressor"/>
    <property type="match status" value="1"/>
</dbReference>
<dbReference type="Gene3D" id="1.10.1270.10">
    <property type="entry name" value="TrpR-like"/>
    <property type="match status" value="1"/>
</dbReference>
<dbReference type="HAMAP" id="MF_00475">
    <property type="entry name" value="Trp_repressor"/>
    <property type="match status" value="1"/>
</dbReference>
<dbReference type="InterPro" id="IPR000831">
    <property type="entry name" value="Trp_repress"/>
</dbReference>
<dbReference type="InterPro" id="IPR013335">
    <property type="entry name" value="Trp_repress_bac"/>
</dbReference>
<dbReference type="InterPro" id="IPR010921">
    <property type="entry name" value="Trp_repressor/repl_initiator"/>
</dbReference>
<dbReference type="InterPro" id="IPR038116">
    <property type="entry name" value="TrpR-like_sf"/>
</dbReference>
<dbReference type="NCBIfam" id="TIGR01321">
    <property type="entry name" value="TrpR"/>
    <property type="match status" value="1"/>
</dbReference>
<dbReference type="PANTHER" id="PTHR38025">
    <property type="entry name" value="TRP OPERON REPRESSOR"/>
    <property type="match status" value="1"/>
</dbReference>
<dbReference type="PANTHER" id="PTHR38025:SF1">
    <property type="entry name" value="TRP OPERON REPRESSOR"/>
    <property type="match status" value="1"/>
</dbReference>
<dbReference type="Pfam" id="PF01371">
    <property type="entry name" value="Trp_repressor"/>
    <property type="match status" value="1"/>
</dbReference>
<dbReference type="PIRSF" id="PIRSF003196">
    <property type="entry name" value="Trp_repressor"/>
    <property type="match status" value="1"/>
</dbReference>
<dbReference type="SUPFAM" id="SSF48295">
    <property type="entry name" value="TrpR-like"/>
    <property type="match status" value="1"/>
</dbReference>
<comment type="function">
    <text evidence="1">This protein is an aporepressor. When complexed with L-tryptophan it binds the operator region of the trp operon (5'-ACTAGT-'3') and prevents the initiation of transcription. The complex also regulates trp repressor biosynthesis by binding to its regulatory region.</text>
</comment>
<comment type="subunit">
    <text evidence="1">Homodimer.</text>
</comment>
<comment type="subcellular location">
    <subcellularLocation>
        <location evidence="1">Cytoplasm</location>
    </subcellularLocation>
</comment>
<comment type="similarity">
    <text evidence="1">Belongs to the TrpR family.</text>
</comment>
<name>TRPR_SERP5</name>
<organism>
    <name type="scientific">Serratia proteamaculans (strain 568)</name>
    <dbReference type="NCBI Taxonomy" id="399741"/>
    <lineage>
        <taxon>Bacteria</taxon>
        <taxon>Pseudomonadati</taxon>
        <taxon>Pseudomonadota</taxon>
        <taxon>Gammaproteobacteria</taxon>
        <taxon>Enterobacterales</taxon>
        <taxon>Yersiniaceae</taxon>
        <taxon>Serratia</taxon>
    </lineage>
</organism>
<accession>A8G9J2</accession>
<feature type="chain" id="PRO_1000060403" description="Trp operon repressor">
    <location>
        <begin position="1"/>
        <end position="109"/>
    </location>
</feature>
<feature type="DNA-binding region" evidence="1">
    <location>
        <begin position="68"/>
        <end position="91"/>
    </location>
</feature>
<protein>
    <recommendedName>
        <fullName evidence="1">Trp operon repressor</fullName>
    </recommendedName>
</protein>
<reference key="1">
    <citation type="submission" date="2007-09" db="EMBL/GenBank/DDBJ databases">
        <title>Complete sequence of chromosome of Serratia proteamaculans 568.</title>
        <authorList>
            <consortium name="US DOE Joint Genome Institute"/>
            <person name="Copeland A."/>
            <person name="Lucas S."/>
            <person name="Lapidus A."/>
            <person name="Barry K."/>
            <person name="Glavina del Rio T."/>
            <person name="Dalin E."/>
            <person name="Tice H."/>
            <person name="Pitluck S."/>
            <person name="Chain P."/>
            <person name="Malfatti S."/>
            <person name="Shin M."/>
            <person name="Vergez L."/>
            <person name="Schmutz J."/>
            <person name="Larimer F."/>
            <person name="Land M."/>
            <person name="Hauser L."/>
            <person name="Kyrpides N."/>
            <person name="Kim E."/>
            <person name="Taghavi S."/>
            <person name="Newman L."/>
            <person name="Vangronsveld J."/>
            <person name="van der Lelie D."/>
            <person name="Richardson P."/>
        </authorList>
    </citation>
    <scope>NUCLEOTIDE SEQUENCE [LARGE SCALE GENOMIC DNA]</scope>
    <source>
        <strain>568</strain>
    </source>
</reference>
<sequence>MTQLSLNDPALSEQGNEDWLRFVALLQNSFAQDLHQPLMQLLLTPDERTALGTRVRIIQELMRGEMSQRELKNELGAGIATITRGSNSLKAATPALKQWLEQQLLGDAQ</sequence>